<feature type="chain" id="PRO_0000213659" description="Putative sugar uptake protein lmo0176">
    <location>
        <begin position="1"/>
        <end position="286"/>
    </location>
</feature>
<feature type="transmembrane region" description="Helical" evidence="1">
    <location>
        <begin position="4"/>
        <end position="26"/>
    </location>
</feature>
<feature type="transmembrane region" description="Helical" evidence="1">
    <location>
        <begin position="33"/>
        <end position="55"/>
    </location>
</feature>
<feature type="transmembrane region" description="Helical" evidence="1">
    <location>
        <begin position="114"/>
        <end position="136"/>
    </location>
</feature>
<feature type="transmembrane region" description="Helical" evidence="1">
    <location>
        <begin position="149"/>
        <end position="167"/>
    </location>
</feature>
<feature type="transmembrane region" description="Helical" evidence="1">
    <location>
        <begin position="177"/>
        <end position="194"/>
    </location>
</feature>
<feature type="transmembrane region" description="Helical" evidence="1">
    <location>
        <begin position="207"/>
        <end position="226"/>
    </location>
</feature>
<feature type="transmembrane region" description="Helical" evidence="1">
    <location>
        <begin position="230"/>
        <end position="252"/>
    </location>
</feature>
<feature type="transmembrane region" description="Helical" evidence="1">
    <location>
        <begin position="264"/>
        <end position="283"/>
    </location>
</feature>
<gene>
    <name type="ordered locus">lmo0176</name>
</gene>
<name>Y176_LISMO</name>
<comment type="subcellular location">
    <subcellularLocation>
        <location evidence="2">Cell membrane</location>
        <topology evidence="2">Multi-pass membrane protein</topology>
    </subcellularLocation>
</comment>
<comment type="similarity">
    <text evidence="2">Belongs to the GRP transporter (TC 2.A.7.5) family.</text>
</comment>
<evidence type="ECO:0000255" key="1"/>
<evidence type="ECO:0000305" key="2"/>
<dbReference type="EMBL" id="AL591973">
    <property type="protein sequence ID" value="CAC98391.1"/>
    <property type="molecule type" value="Genomic_DNA"/>
</dbReference>
<dbReference type="PIR" id="AI1096">
    <property type="entry name" value="AI1096"/>
</dbReference>
<dbReference type="RefSeq" id="NP_463707.1">
    <property type="nucleotide sequence ID" value="NC_003210.1"/>
</dbReference>
<dbReference type="RefSeq" id="WP_003722706.1">
    <property type="nucleotide sequence ID" value="NZ_CP149495.1"/>
</dbReference>
<dbReference type="SMR" id="Q8YAF3"/>
<dbReference type="STRING" id="169963.gene:17592812"/>
<dbReference type="PaxDb" id="169963-lmo0176"/>
<dbReference type="DNASU" id="986935"/>
<dbReference type="EnsemblBacteria" id="CAC98391">
    <property type="protein sequence ID" value="CAC98391"/>
    <property type="gene ID" value="CAC98391"/>
</dbReference>
<dbReference type="GeneID" id="986935"/>
<dbReference type="KEGG" id="lmo:lmo0176"/>
<dbReference type="PATRIC" id="fig|169963.11.peg.181"/>
<dbReference type="eggNOG" id="COG4975">
    <property type="taxonomic scope" value="Bacteria"/>
</dbReference>
<dbReference type="HOGENOM" id="CLU_076024_0_0_9"/>
<dbReference type="OrthoDB" id="1452595at2"/>
<dbReference type="PhylomeDB" id="Q8YAF3"/>
<dbReference type="BioCyc" id="LMON169963:LMO0176-MONOMER"/>
<dbReference type="Proteomes" id="UP000000817">
    <property type="component" value="Chromosome"/>
</dbReference>
<dbReference type="GO" id="GO:0005886">
    <property type="term" value="C:plasma membrane"/>
    <property type="evidence" value="ECO:0007669"/>
    <property type="project" value="UniProtKB-SubCell"/>
</dbReference>
<dbReference type="GO" id="GO:0015144">
    <property type="term" value="F:carbohydrate transmembrane transporter activity"/>
    <property type="evidence" value="ECO:0007669"/>
    <property type="project" value="InterPro"/>
</dbReference>
<dbReference type="CDD" id="cd23112">
    <property type="entry name" value="glucose_uptake_GlcU"/>
    <property type="match status" value="1"/>
</dbReference>
<dbReference type="Gene3D" id="1.10.3730.20">
    <property type="match status" value="1"/>
</dbReference>
<dbReference type="InterPro" id="IPR010651">
    <property type="entry name" value="Sugar_transport"/>
</dbReference>
<dbReference type="PANTHER" id="PTHR16119">
    <property type="entry name" value="TRANSMEMBRANE PROTEIN 144"/>
    <property type="match status" value="1"/>
</dbReference>
<dbReference type="PANTHER" id="PTHR16119:SF17">
    <property type="entry name" value="TRANSMEMBRANE PROTEIN 144"/>
    <property type="match status" value="1"/>
</dbReference>
<dbReference type="Pfam" id="PF06800">
    <property type="entry name" value="Sugar_transport"/>
    <property type="match status" value="1"/>
</dbReference>
<dbReference type="SUPFAM" id="SSF103481">
    <property type="entry name" value="Multidrug resistance efflux transporter EmrE"/>
    <property type="match status" value="2"/>
</dbReference>
<accession>Q8YAF3</accession>
<proteinExistence type="inferred from homology"/>
<organism>
    <name type="scientific">Listeria monocytogenes serovar 1/2a (strain ATCC BAA-679 / EGD-e)</name>
    <dbReference type="NCBI Taxonomy" id="169963"/>
    <lineage>
        <taxon>Bacteria</taxon>
        <taxon>Bacillati</taxon>
        <taxon>Bacillota</taxon>
        <taxon>Bacilli</taxon>
        <taxon>Bacillales</taxon>
        <taxon>Listeriaceae</taxon>
        <taxon>Listeria</taxon>
    </lineage>
</organism>
<protein>
    <recommendedName>
        <fullName>Putative sugar uptake protein lmo0176</fullName>
    </recommendedName>
</protein>
<keyword id="KW-1003">Cell membrane</keyword>
<keyword id="KW-0472">Membrane</keyword>
<keyword id="KW-1185">Reference proteome</keyword>
<keyword id="KW-0762">Sugar transport</keyword>
<keyword id="KW-0812">Transmembrane</keyword>
<keyword id="KW-1133">Transmembrane helix</keyword>
<keyword id="KW-0813">Transport</keyword>
<sequence>MNIMIALIPALLWGTVPLIITKFGGSTRQQTMGMTLGALTFAVIVFFFTDPVYTLKTVGISFITGCLWTVGQMFQLQAFKIIGVSKAMPISTGMQLVGTTLCGVILFHEWDTTLRIILGFIALALIVGGIFLTSYAEKEEDGTNALKQGLITLFISACGYVGLVVLIQGFKIDGINAILPQAIGMVISALIMTHSGGTEKRFNKRTLLLTIPGVIWAAGNVAMVHANQLVGVATGFSLSQLGVVISTIGGIILLKEKKTQKEMLFVIVGVVLVVLGGILIGVAKGA</sequence>
<reference key="1">
    <citation type="journal article" date="2001" name="Science">
        <title>Comparative genomics of Listeria species.</title>
        <authorList>
            <person name="Glaser P."/>
            <person name="Frangeul L."/>
            <person name="Buchrieser C."/>
            <person name="Rusniok C."/>
            <person name="Amend A."/>
            <person name="Baquero F."/>
            <person name="Berche P."/>
            <person name="Bloecker H."/>
            <person name="Brandt P."/>
            <person name="Chakraborty T."/>
            <person name="Charbit A."/>
            <person name="Chetouani F."/>
            <person name="Couve E."/>
            <person name="de Daruvar A."/>
            <person name="Dehoux P."/>
            <person name="Domann E."/>
            <person name="Dominguez-Bernal G."/>
            <person name="Duchaud E."/>
            <person name="Durant L."/>
            <person name="Dussurget O."/>
            <person name="Entian K.-D."/>
            <person name="Fsihi H."/>
            <person name="Garcia-del Portillo F."/>
            <person name="Garrido P."/>
            <person name="Gautier L."/>
            <person name="Goebel W."/>
            <person name="Gomez-Lopez N."/>
            <person name="Hain T."/>
            <person name="Hauf J."/>
            <person name="Jackson D."/>
            <person name="Jones L.-M."/>
            <person name="Kaerst U."/>
            <person name="Kreft J."/>
            <person name="Kuhn M."/>
            <person name="Kunst F."/>
            <person name="Kurapkat G."/>
            <person name="Madueno E."/>
            <person name="Maitournam A."/>
            <person name="Mata Vicente J."/>
            <person name="Ng E."/>
            <person name="Nedjari H."/>
            <person name="Nordsiek G."/>
            <person name="Novella S."/>
            <person name="de Pablos B."/>
            <person name="Perez-Diaz J.-C."/>
            <person name="Purcell R."/>
            <person name="Remmel B."/>
            <person name="Rose M."/>
            <person name="Schlueter T."/>
            <person name="Simoes N."/>
            <person name="Tierrez A."/>
            <person name="Vazquez-Boland J.-A."/>
            <person name="Voss H."/>
            <person name="Wehland J."/>
            <person name="Cossart P."/>
        </authorList>
    </citation>
    <scope>NUCLEOTIDE SEQUENCE [LARGE SCALE GENOMIC DNA]</scope>
    <source>
        <strain>ATCC BAA-679 / EGD-e</strain>
    </source>
</reference>